<proteinExistence type="inferred from homology"/>
<sequence length="210" mass="22487">MATFKSLTEADLLSFSTGLIAGVDEVGRGPLVGDVVTAAVILDPNKPISGLNDSKKLSEKRREALFDEICDKALCYQVGRASPAEIDELNILHATMLAMQRAVAGLNIAPELVLVDGNRSPIFVAHNGAGLTSHSIIKGDGLIASISAASIIAKVTRDREMDVLDAAYPQYGFAKHRGYPTKAHFEAIAEHGVFDQYRKSFKPVKALLGL</sequence>
<organism>
    <name type="scientific">Shewanella baltica (strain OS223)</name>
    <dbReference type="NCBI Taxonomy" id="407976"/>
    <lineage>
        <taxon>Bacteria</taxon>
        <taxon>Pseudomonadati</taxon>
        <taxon>Pseudomonadota</taxon>
        <taxon>Gammaproteobacteria</taxon>
        <taxon>Alteromonadales</taxon>
        <taxon>Shewanellaceae</taxon>
        <taxon>Shewanella</taxon>
    </lineage>
</organism>
<accession>B8E7Q2</accession>
<feature type="chain" id="PRO_1000117684" description="Ribonuclease HII">
    <location>
        <begin position="1"/>
        <end position="210"/>
    </location>
</feature>
<feature type="domain" description="RNase H type-2" evidence="2">
    <location>
        <begin position="18"/>
        <end position="210"/>
    </location>
</feature>
<feature type="binding site" evidence="1">
    <location>
        <position position="24"/>
    </location>
    <ligand>
        <name>a divalent metal cation</name>
        <dbReference type="ChEBI" id="CHEBI:60240"/>
    </ligand>
</feature>
<feature type="binding site" evidence="1">
    <location>
        <position position="25"/>
    </location>
    <ligand>
        <name>a divalent metal cation</name>
        <dbReference type="ChEBI" id="CHEBI:60240"/>
    </ligand>
</feature>
<feature type="binding site" evidence="1">
    <location>
        <position position="116"/>
    </location>
    <ligand>
        <name>a divalent metal cation</name>
        <dbReference type="ChEBI" id="CHEBI:60240"/>
    </ligand>
</feature>
<gene>
    <name evidence="1" type="primary">rnhB</name>
    <name type="ordered locus">Sbal223_2888</name>
</gene>
<name>RNH2_SHEB2</name>
<reference key="1">
    <citation type="submission" date="2008-12" db="EMBL/GenBank/DDBJ databases">
        <title>Complete sequence of chromosome of Shewanella baltica OS223.</title>
        <authorList>
            <consortium name="US DOE Joint Genome Institute"/>
            <person name="Lucas S."/>
            <person name="Copeland A."/>
            <person name="Lapidus A."/>
            <person name="Glavina del Rio T."/>
            <person name="Dalin E."/>
            <person name="Tice H."/>
            <person name="Bruce D."/>
            <person name="Goodwin L."/>
            <person name="Pitluck S."/>
            <person name="Chertkov O."/>
            <person name="Meincke L."/>
            <person name="Brettin T."/>
            <person name="Detter J.C."/>
            <person name="Han C."/>
            <person name="Kuske C.R."/>
            <person name="Larimer F."/>
            <person name="Land M."/>
            <person name="Hauser L."/>
            <person name="Kyrpides N."/>
            <person name="Ovchinnikova G."/>
            <person name="Brettar I."/>
            <person name="Rodrigues J."/>
            <person name="Konstantinidis K."/>
            <person name="Tiedje J."/>
        </authorList>
    </citation>
    <scope>NUCLEOTIDE SEQUENCE [LARGE SCALE GENOMIC DNA]</scope>
    <source>
        <strain>OS223</strain>
    </source>
</reference>
<comment type="function">
    <text evidence="1">Endonuclease that specifically degrades the RNA of RNA-DNA hybrids.</text>
</comment>
<comment type="catalytic activity">
    <reaction evidence="1">
        <text>Endonucleolytic cleavage to 5'-phosphomonoester.</text>
        <dbReference type="EC" id="3.1.26.4"/>
    </reaction>
</comment>
<comment type="cofactor">
    <cofactor evidence="1">
        <name>Mn(2+)</name>
        <dbReference type="ChEBI" id="CHEBI:29035"/>
    </cofactor>
    <cofactor evidence="1">
        <name>Mg(2+)</name>
        <dbReference type="ChEBI" id="CHEBI:18420"/>
    </cofactor>
    <text evidence="1">Manganese or magnesium. Binds 1 divalent metal ion per monomer in the absence of substrate. May bind a second metal ion after substrate binding.</text>
</comment>
<comment type="subcellular location">
    <subcellularLocation>
        <location evidence="1">Cytoplasm</location>
    </subcellularLocation>
</comment>
<comment type="similarity">
    <text evidence="1">Belongs to the RNase HII family.</text>
</comment>
<protein>
    <recommendedName>
        <fullName evidence="1">Ribonuclease HII</fullName>
        <shortName evidence="1">RNase HII</shortName>
        <ecNumber evidence="1">3.1.26.4</ecNumber>
    </recommendedName>
</protein>
<evidence type="ECO:0000255" key="1">
    <source>
        <dbReference type="HAMAP-Rule" id="MF_00052"/>
    </source>
</evidence>
<evidence type="ECO:0000255" key="2">
    <source>
        <dbReference type="PROSITE-ProRule" id="PRU01319"/>
    </source>
</evidence>
<keyword id="KW-0963">Cytoplasm</keyword>
<keyword id="KW-0255">Endonuclease</keyword>
<keyword id="KW-0378">Hydrolase</keyword>
<keyword id="KW-0464">Manganese</keyword>
<keyword id="KW-0479">Metal-binding</keyword>
<keyword id="KW-0540">Nuclease</keyword>
<dbReference type="EC" id="3.1.26.4" evidence="1"/>
<dbReference type="EMBL" id="CP001252">
    <property type="protein sequence ID" value="ACK47374.1"/>
    <property type="molecule type" value="Genomic_DNA"/>
</dbReference>
<dbReference type="RefSeq" id="WP_012588122.1">
    <property type="nucleotide sequence ID" value="NC_011663.1"/>
</dbReference>
<dbReference type="SMR" id="B8E7Q2"/>
<dbReference type="KEGG" id="sbp:Sbal223_2888"/>
<dbReference type="HOGENOM" id="CLU_036532_3_2_6"/>
<dbReference type="Proteomes" id="UP000002507">
    <property type="component" value="Chromosome"/>
</dbReference>
<dbReference type="GO" id="GO:0005737">
    <property type="term" value="C:cytoplasm"/>
    <property type="evidence" value="ECO:0007669"/>
    <property type="project" value="UniProtKB-SubCell"/>
</dbReference>
<dbReference type="GO" id="GO:0032299">
    <property type="term" value="C:ribonuclease H2 complex"/>
    <property type="evidence" value="ECO:0007669"/>
    <property type="project" value="TreeGrafter"/>
</dbReference>
<dbReference type="GO" id="GO:0030145">
    <property type="term" value="F:manganese ion binding"/>
    <property type="evidence" value="ECO:0007669"/>
    <property type="project" value="UniProtKB-UniRule"/>
</dbReference>
<dbReference type="GO" id="GO:0003723">
    <property type="term" value="F:RNA binding"/>
    <property type="evidence" value="ECO:0007669"/>
    <property type="project" value="InterPro"/>
</dbReference>
<dbReference type="GO" id="GO:0004523">
    <property type="term" value="F:RNA-DNA hybrid ribonuclease activity"/>
    <property type="evidence" value="ECO:0007669"/>
    <property type="project" value="UniProtKB-UniRule"/>
</dbReference>
<dbReference type="GO" id="GO:0043137">
    <property type="term" value="P:DNA replication, removal of RNA primer"/>
    <property type="evidence" value="ECO:0007669"/>
    <property type="project" value="TreeGrafter"/>
</dbReference>
<dbReference type="GO" id="GO:0006298">
    <property type="term" value="P:mismatch repair"/>
    <property type="evidence" value="ECO:0007669"/>
    <property type="project" value="TreeGrafter"/>
</dbReference>
<dbReference type="CDD" id="cd07182">
    <property type="entry name" value="RNase_HII_bacteria_HII_like"/>
    <property type="match status" value="1"/>
</dbReference>
<dbReference type="FunFam" id="3.30.420.10:FF:000006">
    <property type="entry name" value="Ribonuclease HII"/>
    <property type="match status" value="1"/>
</dbReference>
<dbReference type="Gene3D" id="3.30.420.10">
    <property type="entry name" value="Ribonuclease H-like superfamily/Ribonuclease H"/>
    <property type="match status" value="1"/>
</dbReference>
<dbReference type="HAMAP" id="MF_00052_B">
    <property type="entry name" value="RNase_HII_B"/>
    <property type="match status" value="1"/>
</dbReference>
<dbReference type="InterPro" id="IPR022898">
    <property type="entry name" value="RNase_HII"/>
</dbReference>
<dbReference type="InterPro" id="IPR001352">
    <property type="entry name" value="RNase_HII/HIII"/>
</dbReference>
<dbReference type="InterPro" id="IPR024567">
    <property type="entry name" value="RNase_HII/HIII_dom"/>
</dbReference>
<dbReference type="InterPro" id="IPR012337">
    <property type="entry name" value="RNaseH-like_sf"/>
</dbReference>
<dbReference type="InterPro" id="IPR036397">
    <property type="entry name" value="RNaseH_sf"/>
</dbReference>
<dbReference type="NCBIfam" id="NF000595">
    <property type="entry name" value="PRK00015.1-3"/>
    <property type="match status" value="1"/>
</dbReference>
<dbReference type="NCBIfam" id="NF000596">
    <property type="entry name" value="PRK00015.1-4"/>
    <property type="match status" value="1"/>
</dbReference>
<dbReference type="PANTHER" id="PTHR10954">
    <property type="entry name" value="RIBONUCLEASE H2 SUBUNIT A"/>
    <property type="match status" value="1"/>
</dbReference>
<dbReference type="PANTHER" id="PTHR10954:SF18">
    <property type="entry name" value="RIBONUCLEASE HII"/>
    <property type="match status" value="1"/>
</dbReference>
<dbReference type="Pfam" id="PF01351">
    <property type="entry name" value="RNase_HII"/>
    <property type="match status" value="1"/>
</dbReference>
<dbReference type="SUPFAM" id="SSF53098">
    <property type="entry name" value="Ribonuclease H-like"/>
    <property type="match status" value="1"/>
</dbReference>
<dbReference type="PROSITE" id="PS51975">
    <property type="entry name" value="RNASE_H_2"/>
    <property type="match status" value="1"/>
</dbReference>